<name>YBFA_ECO57</name>
<feature type="signal peptide" evidence="1">
    <location>
        <begin position="1"/>
        <end position="21"/>
    </location>
</feature>
<feature type="chain" id="PRO_0000042558" description="Uncharacterized protein YbfA">
    <location>
        <begin position="22"/>
        <end position="68"/>
    </location>
</feature>
<evidence type="ECO:0000255" key="1"/>
<gene>
    <name type="primary">ybfA</name>
    <name type="ordered locus">Z0846</name>
    <name type="ordered locus">ECs0728</name>
</gene>
<sequence length="68" mass="8275">MELYREYPAWLIFLRRTYAVAAGVLALPFMLFWKDRARFYSYLHRVWSKTSDKPVWMDQAEKATGDFY</sequence>
<proteinExistence type="inferred from homology"/>
<organism>
    <name type="scientific">Escherichia coli O157:H7</name>
    <dbReference type="NCBI Taxonomy" id="83334"/>
    <lineage>
        <taxon>Bacteria</taxon>
        <taxon>Pseudomonadati</taxon>
        <taxon>Pseudomonadota</taxon>
        <taxon>Gammaproteobacteria</taxon>
        <taxon>Enterobacterales</taxon>
        <taxon>Enterobacteriaceae</taxon>
        <taxon>Escherichia</taxon>
    </lineage>
</organism>
<accession>P0AAU3</accession>
<accession>P28913</accession>
<keyword id="KW-1185">Reference proteome</keyword>
<keyword id="KW-0732">Signal</keyword>
<protein>
    <recommendedName>
        <fullName>Uncharacterized protein YbfA</fullName>
    </recommendedName>
</protein>
<reference key="1">
    <citation type="journal article" date="2001" name="Nature">
        <title>Genome sequence of enterohaemorrhagic Escherichia coli O157:H7.</title>
        <authorList>
            <person name="Perna N.T."/>
            <person name="Plunkett G. III"/>
            <person name="Burland V."/>
            <person name="Mau B."/>
            <person name="Glasner J.D."/>
            <person name="Rose D.J."/>
            <person name="Mayhew G.F."/>
            <person name="Evans P.S."/>
            <person name="Gregor J."/>
            <person name="Kirkpatrick H.A."/>
            <person name="Posfai G."/>
            <person name="Hackett J."/>
            <person name="Klink S."/>
            <person name="Boutin A."/>
            <person name="Shao Y."/>
            <person name="Miller L."/>
            <person name="Grotbeck E.J."/>
            <person name="Davis N.W."/>
            <person name="Lim A."/>
            <person name="Dimalanta E.T."/>
            <person name="Potamousis K."/>
            <person name="Apodaca J."/>
            <person name="Anantharaman T.S."/>
            <person name="Lin J."/>
            <person name="Yen G."/>
            <person name="Schwartz D.C."/>
            <person name="Welch R.A."/>
            <person name="Blattner F.R."/>
        </authorList>
    </citation>
    <scope>NUCLEOTIDE SEQUENCE [LARGE SCALE GENOMIC DNA]</scope>
    <source>
        <strain>O157:H7 / EDL933 / ATCC 700927 / EHEC</strain>
    </source>
</reference>
<reference key="2">
    <citation type="journal article" date="2001" name="DNA Res.">
        <title>Complete genome sequence of enterohemorrhagic Escherichia coli O157:H7 and genomic comparison with a laboratory strain K-12.</title>
        <authorList>
            <person name="Hayashi T."/>
            <person name="Makino K."/>
            <person name="Ohnishi M."/>
            <person name="Kurokawa K."/>
            <person name="Ishii K."/>
            <person name="Yokoyama K."/>
            <person name="Han C.-G."/>
            <person name="Ohtsubo E."/>
            <person name="Nakayama K."/>
            <person name="Murata T."/>
            <person name="Tanaka M."/>
            <person name="Tobe T."/>
            <person name="Iida T."/>
            <person name="Takami H."/>
            <person name="Honda T."/>
            <person name="Sasakawa C."/>
            <person name="Ogasawara N."/>
            <person name="Yasunaga T."/>
            <person name="Kuhara S."/>
            <person name="Shiba T."/>
            <person name="Hattori M."/>
            <person name="Shinagawa H."/>
        </authorList>
    </citation>
    <scope>NUCLEOTIDE SEQUENCE [LARGE SCALE GENOMIC DNA]</scope>
    <source>
        <strain>O157:H7 / Sakai / RIMD 0509952 / EHEC</strain>
    </source>
</reference>
<dbReference type="EMBL" id="AE005174">
    <property type="protein sequence ID" value="AAG55020.1"/>
    <property type="molecule type" value="Genomic_DNA"/>
</dbReference>
<dbReference type="EMBL" id="BA000007">
    <property type="protein sequence ID" value="BAB34151.1"/>
    <property type="molecule type" value="Genomic_DNA"/>
</dbReference>
<dbReference type="PIR" id="H85569">
    <property type="entry name" value="H85569"/>
</dbReference>
<dbReference type="PIR" id="H90719">
    <property type="entry name" value="H90719"/>
</dbReference>
<dbReference type="RefSeq" id="NP_308755.1">
    <property type="nucleotide sequence ID" value="NC_002695.1"/>
</dbReference>
<dbReference type="RefSeq" id="WP_000424924.1">
    <property type="nucleotide sequence ID" value="NZ_VOAI01000012.1"/>
</dbReference>
<dbReference type="STRING" id="155864.Z0846"/>
<dbReference type="GeneID" id="917097"/>
<dbReference type="KEGG" id="ece:Z0846"/>
<dbReference type="KEGG" id="ecs:ECs_0728"/>
<dbReference type="PATRIC" id="fig|386585.9.peg.844"/>
<dbReference type="eggNOG" id="ENOG50331J8">
    <property type="taxonomic scope" value="Bacteria"/>
</dbReference>
<dbReference type="HOGENOM" id="CLU_179850_0_0_6"/>
<dbReference type="OMA" id="DKPVWLE"/>
<dbReference type="Proteomes" id="UP000000558">
    <property type="component" value="Chromosome"/>
</dbReference>
<dbReference type="Proteomes" id="UP000002519">
    <property type="component" value="Chromosome"/>
</dbReference>
<dbReference type="InterPro" id="IPR019663">
    <property type="entry name" value="YbfA"/>
</dbReference>
<dbReference type="Pfam" id="PF10725">
    <property type="entry name" value="DUF2517"/>
    <property type="match status" value="1"/>
</dbReference>